<proteinExistence type="predicted"/>
<gene>
    <name type="ordered locus">MIMI_R665</name>
</gene>
<accession>Q5UNS8</accession>
<dbReference type="EMBL" id="AY653733">
    <property type="protein sequence ID" value="AAV50926.1"/>
    <property type="molecule type" value="Genomic_DNA"/>
</dbReference>
<dbReference type="SMR" id="Q5UNS8"/>
<dbReference type="KEGG" id="vg:9925311"/>
<dbReference type="OrthoDB" id="5967at10239"/>
<dbReference type="Proteomes" id="UP000001134">
    <property type="component" value="Genome"/>
</dbReference>
<dbReference type="GO" id="GO:0016491">
    <property type="term" value="F:oxidoreductase activity"/>
    <property type="evidence" value="ECO:0007669"/>
    <property type="project" value="TreeGrafter"/>
</dbReference>
<dbReference type="Gene3D" id="3.40.50.720">
    <property type="entry name" value="NAD(P)-binding Rossmann-like Domain"/>
    <property type="match status" value="1"/>
</dbReference>
<dbReference type="InterPro" id="IPR051468">
    <property type="entry name" value="Fungal_SecMetab_SDRs"/>
</dbReference>
<dbReference type="InterPro" id="IPR036291">
    <property type="entry name" value="NAD(P)-bd_dom_sf"/>
</dbReference>
<dbReference type="InterPro" id="IPR002347">
    <property type="entry name" value="SDR_fam"/>
</dbReference>
<dbReference type="PANTHER" id="PTHR43544:SF2">
    <property type="entry name" value="OXIDOREDUCTASE"/>
    <property type="match status" value="1"/>
</dbReference>
<dbReference type="PANTHER" id="PTHR43544">
    <property type="entry name" value="SHORT-CHAIN DEHYDROGENASE/REDUCTASE"/>
    <property type="match status" value="1"/>
</dbReference>
<dbReference type="Pfam" id="PF00106">
    <property type="entry name" value="adh_short"/>
    <property type="match status" value="1"/>
</dbReference>
<dbReference type="SUPFAM" id="SSF51735">
    <property type="entry name" value="NAD(P)-binding Rossmann-fold domains"/>
    <property type="match status" value="1"/>
</dbReference>
<feature type="chain" id="PRO_0000253432" description="Uncharacterized protein R665">
    <location>
        <begin position="1"/>
        <end position="467"/>
    </location>
</feature>
<sequence length="467" mass="54465">MEHTEPEKTDLKSVDLIEMEDTEKLIGTKRKFTDVPIVFRPKKKRVIIEYEPNTLDIPVSDQESFLKLSAPYITQLYSAPNVTEYTLRDFFVRDKIMPGLIQIQEKMFNIKKTSIRPCYICKRPMTKVHWFYLYQCNECGNESLKYRYASRNLYGKNALVIGGRIKLGYQIALKLLRAGCRVMITTRSVHNALEFYNQEPDYNEFKSRLFVYSKGFDLGKARESLPDLVNEITNLFGQQQLDILIQNAAQTICFQENIDNKQQEFESLSEAEILDLVKKRGGKRLTFPPVDWRVDFAERYGRVLDRRSINTWSKNIYETSDEEIISVIQSNMIGSILIDKYLIPNMRPSEDTYVIHVHAKEGTFDTHKTMKHTHTNIAKAGLAMLTRCLAGQSENDTEPRSQWPQIHGVNPGWFSIDEYTIYARTRGKIFNPPIDEIDAASRVVHPIFFQKKSYCKSWIDYKKCHHF</sequence>
<reference key="1">
    <citation type="journal article" date="2004" name="Science">
        <title>The 1.2-megabase genome sequence of Mimivirus.</title>
        <authorList>
            <person name="Raoult D."/>
            <person name="Audic S."/>
            <person name="Robert C."/>
            <person name="Abergel C."/>
            <person name="Renesto P."/>
            <person name="Ogata H."/>
            <person name="La Scola B."/>
            <person name="Susan M."/>
            <person name="Claverie J.-M."/>
        </authorList>
    </citation>
    <scope>NUCLEOTIDE SEQUENCE [LARGE SCALE GENOMIC DNA]</scope>
    <source>
        <strain>Rowbotham-Bradford</strain>
    </source>
</reference>
<keyword id="KW-1185">Reference proteome</keyword>
<organismHost>
    <name type="scientific">Acanthamoeba polyphaga</name>
    <name type="common">Amoeba</name>
    <dbReference type="NCBI Taxonomy" id="5757"/>
</organismHost>
<name>YR665_MIMIV</name>
<protein>
    <recommendedName>
        <fullName>Uncharacterized protein R665</fullName>
    </recommendedName>
</protein>
<organism>
    <name type="scientific">Acanthamoeba polyphaga mimivirus</name>
    <name type="common">APMV</name>
    <dbReference type="NCBI Taxonomy" id="212035"/>
    <lineage>
        <taxon>Viruses</taxon>
        <taxon>Varidnaviria</taxon>
        <taxon>Bamfordvirae</taxon>
        <taxon>Nucleocytoviricota</taxon>
        <taxon>Megaviricetes</taxon>
        <taxon>Imitervirales</taxon>
        <taxon>Mimiviridae</taxon>
        <taxon>Megamimivirinae</taxon>
        <taxon>Mimivirus</taxon>
        <taxon>Mimivirus bradfordmassiliense</taxon>
    </lineage>
</organism>